<comment type="function">
    <text evidence="5 6">Cell membrane-cytoskeleton-associated protein that plays a role in the regulation of actin polymerization at the barbed end of actin filaments. Prevents F-actin heterodimeric capping protein (CP) activity at the leading edges of migrating cells, and hence generates uncapped barbed ends and enhances actin polymerization, however, seems unable to nucleate filaments (PubMed:16054028). Plays a role in lamellipodial protrusion formations and cell migration (PubMed:19846667).</text>
</comment>
<comment type="subunit">
    <text evidence="1 6">Homodimer (PubMed:19846667). Interacts (via C-terminus) with heterodimer capping protein (CP); this interaction uncaps barbed ends capped by CP, enhances barbed-end actin polymerization and promotes lamellipodial formation and cell migration (By similarity). Interacts with heterodimer capping protein (CP) (PubMed:19846667). Interacts with MYO1E (PubMed:19846667). Interacts with TRIO (PubMed:19846667).</text>
</comment>
<comment type="subcellular location">
    <subcellularLocation>
        <location evidence="6">Cytoplasm</location>
    </subcellularLocation>
    <subcellularLocation>
        <location evidence="1">Cytoplasm</location>
        <location evidence="1">Cytoskeleton</location>
    </subcellularLocation>
    <subcellularLocation>
        <location evidence="7">Cell membrane</location>
    </subcellularLocation>
    <subcellularLocation>
        <location evidence="6">Cell projection</location>
        <location evidence="6">Lamellipodium</location>
    </subcellularLocation>
    <text evidence="6">Found on macropinosomes (PubMed:19846667). Colocalized with heterodimeric capping protein (CP) and F-actin in lamellipodia but not with F-actin in stress fibers (PubMed:19846667).</text>
</comment>
<comment type="alternative products">
    <event type="alternative splicing"/>
    <isoform>
        <id>Q5VZK9-1</id>
        <name>1</name>
        <name evidence="10">CARMIL1a</name>
        <sequence type="displayed"/>
    </isoform>
    <isoform>
        <id>Q5VZK9-2</id>
        <name>2</name>
        <sequence type="described" ref="VSP_032420"/>
    </isoform>
    <isoform>
        <id>Q5VZK9-3</id>
        <name>3</name>
        <sequence type="described" ref="VSP_032418 VSP_032419"/>
    </isoform>
    <isoform>
        <id>Q5VZK9-4</id>
        <name>4</name>
        <sequence type="described" ref="VSP_032415 VSP_032416 VSP_032417"/>
    </isoform>
</comment>
<comment type="tissue specificity">
    <text evidence="5">Expressed in lung, placenta, small intestine, liver, thymus, colon, skeletal muscle, heart and brain. Higher expression in kidney.</text>
</comment>
<comment type="domain">
    <text evidence="7">The C-terminus is necessary for localization to the cell membrane (PubMed:26578515).</text>
</comment>
<comment type="similarity">
    <text evidence="11">Belongs to the CARMIL family.</text>
</comment>
<comment type="sequence caution" evidence="11">
    <conflict type="erroneous initiation">
        <sequence resource="EMBL-CDS" id="BAA90912"/>
    </conflict>
</comment>
<name>CARL1_HUMAN</name>
<organism>
    <name type="scientific">Homo sapiens</name>
    <name type="common">Human</name>
    <dbReference type="NCBI Taxonomy" id="9606"/>
    <lineage>
        <taxon>Eukaryota</taxon>
        <taxon>Metazoa</taxon>
        <taxon>Chordata</taxon>
        <taxon>Craniata</taxon>
        <taxon>Vertebrata</taxon>
        <taxon>Euteleostomi</taxon>
        <taxon>Mammalia</taxon>
        <taxon>Eutheria</taxon>
        <taxon>Euarchontoglires</taxon>
        <taxon>Primates</taxon>
        <taxon>Haplorrhini</taxon>
        <taxon>Catarrhini</taxon>
        <taxon>Hominidae</taxon>
        <taxon>Homo</taxon>
    </lineage>
</organism>
<gene>
    <name evidence="9 12" type="primary">CARMIL1</name>
    <name evidence="2" type="synonym">CARMIL</name>
    <name type="synonym">LRRC16</name>
    <name type="synonym">LRRC16A</name>
</gene>
<accession>Q5VZK9</accession>
<accession>B8X1J0</accession>
<accession>Q6ZUH5</accession>
<accession>Q6ZW07</accession>
<accession>Q9NXU7</accession>
<feature type="chain" id="PRO_0000325815" description="F-actin-uncapping protein LRRC16A">
    <location>
        <begin position="1"/>
        <end position="1371"/>
    </location>
</feature>
<feature type="repeat" description="LRR 1">
    <location>
        <begin position="245"/>
        <end position="269"/>
    </location>
</feature>
<feature type="repeat" description="LRR 2">
    <location>
        <begin position="275"/>
        <end position="298"/>
    </location>
</feature>
<feature type="repeat" description="LRR 3">
    <location>
        <begin position="304"/>
        <end position="327"/>
    </location>
</feature>
<feature type="repeat" description="LRR 4">
    <location>
        <begin position="336"/>
        <end position="363"/>
    </location>
</feature>
<feature type="repeat" description="LRR 5">
    <location>
        <begin position="391"/>
        <end position="418"/>
    </location>
</feature>
<feature type="repeat" description="LRR 6">
    <location>
        <begin position="423"/>
        <end position="447"/>
    </location>
</feature>
<feature type="repeat" description="LRR 7">
    <location>
        <begin position="481"/>
        <end position="506"/>
    </location>
</feature>
<feature type="repeat" description="LRR 8">
    <location>
        <begin position="543"/>
        <end position="566"/>
    </location>
</feature>
<feature type="repeat" description="LRR 9">
    <location>
        <begin position="570"/>
        <end position="593"/>
    </location>
</feature>
<feature type="repeat" description="LRR 10">
    <location>
        <begin position="654"/>
        <end position="678"/>
    </location>
</feature>
<feature type="repeat" description="LRR 11">
    <location>
        <begin position="958"/>
        <end position="981"/>
    </location>
</feature>
<feature type="region of interest" description="Disordered" evidence="4">
    <location>
        <begin position="957"/>
        <end position="1000"/>
    </location>
</feature>
<feature type="region of interest" description="Inhibits capping activity of CAPZA2" evidence="1">
    <location>
        <begin position="958"/>
        <end position="1082"/>
    </location>
</feature>
<feature type="region of interest" description="Disordered" evidence="4">
    <location>
        <begin position="1036"/>
        <end position="1159"/>
    </location>
</feature>
<feature type="region of interest" description="Necessary for localization at the cell membrane" evidence="7">
    <location>
        <begin position="1055"/>
        <end position="1089"/>
    </location>
</feature>
<feature type="region of interest" description="Disordered" evidence="4">
    <location>
        <begin position="1172"/>
        <end position="1371"/>
    </location>
</feature>
<feature type="coiled-coil region" evidence="3">
    <location>
        <begin position="710"/>
        <end position="734"/>
    </location>
</feature>
<feature type="compositionally biased region" description="Basic and acidic residues" evidence="4">
    <location>
        <begin position="977"/>
        <end position="986"/>
    </location>
</feature>
<feature type="compositionally biased region" description="Basic and acidic residues" evidence="4">
    <location>
        <begin position="1036"/>
        <end position="1061"/>
    </location>
</feature>
<feature type="compositionally biased region" description="Basic and acidic residues" evidence="4">
    <location>
        <begin position="1106"/>
        <end position="1130"/>
    </location>
</feature>
<feature type="compositionally biased region" description="Basic and acidic residues" evidence="4">
    <location>
        <begin position="1139"/>
        <end position="1148"/>
    </location>
</feature>
<feature type="compositionally biased region" description="Polar residues" evidence="4">
    <location>
        <begin position="1190"/>
        <end position="1199"/>
    </location>
</feature>
<feature type="compositionally biased region" description="Basic and acidic residues" evidence="4">
    <location>
        <begin position="1231"/>
        <end position="1243"/>
    </location>
</feature>
<feature type="compositionally biased region" description="Low complexity" evidence="4">
    <location>
        <begin position="1244"/>
        <end position="1265"/>
    </location>
</feature>
<feature type="compositionally biased region" description="Polar residues" evidence="4">
    <location>
        <begin position="1313"/>
        <end position="1326"/>
    </location>
</feature>
<feature type="compositionally biased region" description="Basic and acidic residues" evidence="4">
    <location>
        <begin position="1340"/>
        <end position="1353"/>
    </location>
</feature>
<feature type="modified residue" description="N-acetylmethionine" evidence="17">
    <location>
        <position position="1"/>
    </location>
</feature>
<feature type="modified residue" description="Phosphoserine" evidence="18">
    <location>
        <position position="122"/>
    </location>
</feature>
<feature type="modified residue" description="Phosphothreonine" evidence="13 19">
    <location>
        <position position="916"/>
    </location>
</feature>
<feature type="modified residue" description="Phosphoserine" evidence="13 14 16 18">
    <location>
        <position position="968"/>
    </location>
</feature>
<feature type="modified residue" description="Phosphoserine" evidence="15 18">
    <location>
        <position position="1067"/>
    </location>
</feature>
<feature type="modified residue" description="Phosphoserine" evidence="18">
    <location>
        <position position="1094"/>
    </location>
</feature>
<feature type="modified residue" description="Phosphothreonine" evidence="18">
    <location>
        <position position="1228"/>
    </location>
</feature>
<feature type="modified residue" description="Phosphoserine" evidence="18">
    <location>
        <position position="1280"/>
    </location>
</feature>
<feature type="modified residue" description="Phosphoserine" evidence="13 15 16 18">
    <location>
        <position position="1288"/>
    </location>
</feature>
<feature type="modified residue" description="Phosphoserine" evidence="13 18">
    <location>
        <position position="1291"/>
    </location>
</feature>
<feature type="modified residue" description="Phosphoserine" evidence="16">
    <location>
        <position position="1315"/>
    </location>
</feature>
<feature type="modified residue" description="Phosphoserine" evidence="18">
    <location>
        <position position="1324"/>
    </location>
</feature>
<feature type="modified residue" description="Phosphoserine" evidence="13 15 16 18">
    <location>
        <position position="1331"/>
    </location>
</feature>
<feature type="modified residue" description="Phosphoserine" evidence="16 18">
    <location>
        <position position="1360"/>
    </location>
</feature>
<feature type="splice variant" id="VSP_032415" description="In isoform 4." evidence="8">
    <location>
        <begin position="1"/>
        <end position="161"/>
    </location>
</feature>
<feature type="splice variant" id="VSP_032416" description="In isoform 4." evidence="8">
    <original>GVSSLSIQFAKLPKGLKHLNLSKTSLSPKGVNSLSQSLSANPLTAS</original>
    <variation>ETTTKIKRQNVPTVLQTYLVVCPSDYQPCPLPLGKDNYYSDFSHDG</variation>
    <location>
        <begin position="292"/>
        <end position="337"/>
    </location>
</feature>
<feature type="splice variant" id="VSP_032417" description="In isoform 4." evidence="8">
    <location>
        <begin position="338"/>
        <end position="1371"/>
    </location>
</feature>
<feature type="splice variant" id="VSP_032418" description="In isoform 3." evidence="8">
    <original>SLDISDNGLESDLS</original>
    <variation>QLGTRYRNAVLRVY</variation>
    <location>
        <begin position="486"/>
        <end position="499"/>
    </location>
</feature>
<feature type="splice variant" id="VSP_032419" description="In isoform 3." evidence="8">
    <location>
        <begin position="500"/>
        <end position="1371"/>
    </location>
</feature>
<feature type="splice variant" id="VSP_032420" description="In isoform 2." evidence="8">
    <location>
        <begin position="1177"/>
        <end position="1221"/>
    </location>
</feature>
<feature type="sequence variant" id="VAR_039923" description="In dbSNP:rs9358856.">
    <original>V</original>
    <variation>I</variation>
    <location>
        <position position="77"/>
    </location>
</feature>
<feature type="sequence variant" id="VAR_039924" description="In dbSNP:rs12207840.">
    <original>P</original>
    <variation>L</variation>
    <location>
        <position position="545"/>
    </location>
</feature>
<feature type="sequence variant" id="VAR_039925" description="In dbSNP:rs7454756.">
    <original>A</original>
    <variation>G</variation>
    <location>
        <position position="639"/>
    </location>
</feature>
<feature type="sequence variant" id="VAR_039926" description="In dbSNP:rs9885914.">
    <original>N</original>
    <variation>S</variation>
    <location>
        <position position="1117"/>
    </location>
</feature>
<feature type="sequence conflict" description="In Ref. 1; BAC85701." evidence="11" ref="1">
    <original>N</original>
    <variation>D</variation>
    <location>
        <position position="255"/>
    </location>
</feature>
<feature type="sequence conflict" description="In Ref. 1; BAA90912." evidence="11" ref="1">
    <original>K</original>
    <variation>R</variation>
    <location>
        <position position="889"/>
    </location>
</feature>
<feature type="sequence conflict" description="In Ref. 1; ACI49709." evidence="11" ref="1">
    <original>G</original>
    <variation>S</variation>
    <location>
        <position position="1202"/>
    </location>
</feature>
<feature type="strand" evidence="21">
    <location>
        <begin position="978"/>
        <end position="980"/>
    </location>
</feature>
<feature type="helix" evidence="20">
    <location>
        <begin position="985"/>
        <end position="988"/>
    </location>
</feature>
<feature type="strand" evidence="21">
    <location>
        <begin position="999"/>
        <end position="1002"/>
    </location>
</feature>
<feature type="helix" evidence="21">
    <location>
        <begin position="1026"/>
        <end position="1029"/>
    </location>
</feature>
<dbReference type="EMBL" id="FJ009082">
    <property type="protein sequence ID" value="ACI49709.1"/>
    <property type="molecule type" value="mRNA"/>
</dbReference>
<dbReference type="EMBL" id="AK123817">
    <property type="protein sequence ID" value="BAC85701.1"/>
    <property type="molecule type" value="mRNA"/>
</dbReference>
<dbReference type="EMBL" id="AK125696">
    <property type="protein sequence ID" value="BAC86250.1"/>
    <property type="molecule type" value="mRNA"/>
</dbReference>
<dbReference type="EMBL" id="AK000055">
    <property type="protein sequence ID" value="BAA90912.1"/>
    <property type="status" value="ALT_INIT"/>
    <property type="molecule type" value="mRNA"/>
</dbReference>
<dbReference type="EMBL" id="AL022170">
    <property type="status" value="NOT_ANNOTATED_CDS"/>
    <property type="molecule type" value="Genomic_DNA"/>
</dbReference>
<dbReference type="EMBL" id="AL024509">
    <property type="status" value="NOT_ANNOTATED_CDS"/>
    <property type="molecule type" value="Genomic_DNA"/>
</dbReference>
<dbReference type="EMBL" id="AL160037">
    <property type="status" value="NOT_ANNOTATED_CDS"/>
    <property type="molecule type" value="Genomic_DNA"/>
</dbReference>
<dbReference type="CCDS" id="CCDS54973.1">
    <molecule id="Q5VZK9-1"/>
</dbReference>
<dbReference type="RefSeq" id="NP_060110.4">
    <molecule id="Q5VZK9-1"/>
    <property type="nucleotide sequence ID" value="NM_017640.5"/>
</dbReference>
<dbReference type="PDB" id="3LK2">
    <property type="method" value="X-ray"/>
    <property type="resolution" value="2.20 A"/>
    <property type="chains" value="T=961-1012"/>
</dbReference>
<dbReference type="PDB" id="3LK3">
    <property type="method" value="X-ray"/>
    <property type="resolution" value="2.68 A"/>
    <property type="chains" value="T=964-1078"/>
</dbReference>
<dbReference type="PDBsum" id="3LK2"/>
<dbReference type="PDBsum" id="3LK3"/>
<dbReference type="SMR" id="Q5VZK9"/>
<dbReference type="BioGRID" id="120745">
    <property type="interactions" value="80"/>
</dbReference>
<dbReference type="DIP" id="DIP-56920N"/>
<dbReference type="FunCoup" id="Q5VZK9">
    <property type="interactions" value="2218"/>
</dbReference>
<dbReference type="IntAct" id="Q5VZK9">
    <property type="interactions" value="29"/>
</dbReference>
<dbReference type="MINT" id="Q5VZK9"/>
<dbReference type="STRING" id="9606.ENSP00000331983"/>
<dbReference type="GlyGen" id="Q5VZK9">
    <property type="glycosylation" value="1 site, 1 O-linked glycan (1 site)"/>
</dbReference>
<dbReference type="iPTMnet" id="Q5VZK9"/>
<dbReference type="PhosphoSitePlus" id="Q5VZK9"/>
<dbReference type="SwissPalm" id="Q5VZK9"/>
<dbReference type="BioMuta" id="CARMIL1"/>
<dbReference type="DMDM" id="74762279"/>
<dbReference type="jPOST" id="Q5VZK9"/>
<dbReference type="MassIVE" id="Q5VZK9"/>
<dbReference type="PaxDb" id="9606-ENSP00000331983"/>
<dbReference type="PeptideAtlas" id="Q5VZK9"/>
<dbReference type="ProteomicsDB" id="65702">
    <molecule id="Q5VZK9-1"/>
</dbReference>
<dbReference type="ProteomicsDB" id="65703">
    <molecule id="Q5VZK9-2"/>
</dbReference>
<dbReference type="ProteomicsDB" id="65704">
    <molecule id="Q5VZK9-3"/>
</dbReference>
<dbReference type="ProteomicsDB" id="65705">
    <molecule id="Q5VZK9-4"/>
</dbReference>
<dbReference type="Pumba" id="Q5VZK9"/>
<dbReference type="Antibodypedia" id="25380">
    <property type="antibodies" value="85 antibodies from 17 providers"/>
</dbReference>
<dbReference type="DNASU" id="55604"/>
<dbReference type="Ensembl" id="ENST00000329474.7">
    <molecule id="Q5VZK9-1"/>
    <property type="protein sequence ID" value="ENSP00000331983.6"/>
    <property type="gene ID" value="ENSG00000079691.19"/>
</dbReference>
<dbReference type="GeneID" id="55604"/>
<dbReference type="KEGG" id="hsa:55604"/>
<dbReference type="MANE-Select" id="ENST00000329474.7">
    <property type="protein sequence ID" value="ENSP00000331983.6"/>
    <property type="RefSeq nucleotide sequence ID" value="NM_017640.6"/>
    <property type="RefSeq protein sequence ID" value="NP_060110.4"/>
</dbReference>
<dbReference type="UCSC" id="uc011djw.2">
    <molecule id="Q5VZK9-1"/>
    <property type="organism name" value="human"/>
</dbReference>
<dbReference type="AGR" id="HGNC:21581"/>
<dbReference type="CTD" id="55604"/>
<dbReference type="DisGeNET" id="55604"/>
<dbReference type="GeneCards" id="CARMIL1"/>
<dbReference type="HGNC" id="HGNC:21581">
    <property type="gene designation" value="CARMIL1"/>
</dbReference>
<dbReference type="HPA" id="ENSG00000079691">
    <property type="expression patterns" value="Low tissue specificity"/>
</dbReference>
<dbReference type="MIM" id="609593">
    <property type="type" value="gene"/>
</dbReference>
<dbReference type="neXtProt" id="NX_Q5VZK9"/>
<dbReference type="OpenTargets" id="ENSG00000079691"/>
<dbReference type="PharmGKB" id="PA162394368"/>
<dbReference type="VEuPathDB" id="HostDB:ENSG00000079691"/>
<dbReference type="eggNOG" id="KOG4242">
    <property type="taxonomic scope" value="Eukaryota"/>
</dbReference>
<dbReference type="GeneTree" id="ENSGT00940000155112"/>
<dbReference type="HOGENOM" id="CLU_003119_3_0_1"/>
<dbReference type="InParanoid" id="Q5VZK9"/>
<dbReference type="OMA" id="KGCEERL"/>
<dbReference type="OrthoDB" id="18598at2759"/>
<dbReference type="PAN-GO" id="Q5VZK9">
    <property type="GO annotations" value="5 GO annotations based on evolutionary models"/>
</dbReference>
<dbReference type="PhylomeDB" id="Q5VZK9"/>
<dbReference type="TreeFam" id="TF316381"/>
<dbReference type="PathwayCommons" id="Q5VZK9"/>
<dbReference type="Reactome" id="R-HSA-983231">
    <property type="pathway name" value="Factors involved in megakaryocyte development and platelet production"/>
</dbReference>
<dbReference type="SignaLink" id="Q5VZK9"/>
<dbReference type="BioGRID-ORCS" id="55604">
    <property type="hits" value="11 hits in 1155 CRISPR screens"/>
</dbReference>
<dbReference type="ChiTaRS" id="CARMIL1">
    <property type="organism name" value="human"/>
</dbReference>
<dbReference type="EvolutionaryTrace" id="Q5VZK9"/>
<dbReference type="GeneWiki" id="LRRC16A"/>
<dbReference type="GenomeRNAi" id="55604"/>
<dbReference type="Pharos" id="Q5VZK9">
    <property type="development level" value="Tbio"/>
</dbReference>
<dbReference type="PRO" id="PR:Q5VZK9"/>
<dbReference type="Proteomes" id="UP000005640">
    <property type="component" value="Chromosome 6"/>
</dbReference>
<dbReference type="RNAct" id="Q5VZK9">
    <property type="molecule type" value="protein"/>
</dbReference>
<dbReference type="Bgee" id="ENSG00000079691">
    <property type="expression patterns" value="Expressed in oocyte and 151 other cell types or tissues"/>
</dbReference>
<dbReference type="ExpressionAtlas" id="Q5VZK9">
    <property type="expression patterns" value="baseline and differential"/>
</dbReference>
<dbReference type="GO" id="GO:0031252">
    <property type="term" value="C:cell leading edge"/>
    <property type="evidence" value="ECO:0000314"/>
    <property type="project" value="UniProtKB"/>
</dbReference>
<dbReference type="GO" id="GO:0005829">
    <property type="term" value="C:cytosol"/>
    <property type="evidence" value="ECO:0000314"/>
    <property type="project" value="HPA"/>
</dbReference>
<dbReference type="GO" id="GO:0070062">
    <property type="term" value="C:extracellular exosome"/>
    <property type="evidence" value="ECO:0007005"/>
    <property type="project" value="UniProtKB"/>
</dbReference>
<dbReference type="GO" id="GO:0031941">
    <property type="term" value="C:filamentous actin"/>
    <property type="evidence" value="ECO:0000250"/>
    <property type="project" value="CAFA"/>
</dbReference>
<dbReference type="GO" id="GO:0030027">
    <property type="term" value="C:lamellipodium"/>
    <property type="evidence" value="ECO:0000314"/>
    <property type="project" value="BHF-UCL"/>
</dbReference>
<dbReference type="GO" id="GO:0044354">
    <property type="term" value="C:macropinosome"/>
    <property type="evidence" value="ECO:0000314"/>
    <property type="project" value="UniProtKB"/>
</dbReference>
<dbReference type="GO" id="GO:0016607">
    <property type="term" value="C:nuclear speck"/>
    <property type="evidence" value="ECO:0000314"/>
    <property type="project" value="HPA"/>
</dbReference>
<dbReference type="GO" id="GO:0005886">
    <property type="term" value="C:plasma membrane"/>
    <property type="evidence" value="ECO:0000314"/>
    <property type="project" value="HPA"/>
</dbReference>
<dbReference type="GO" id="GO:0044877">
    <property type="term" value="F:protein-containing complex binding"/>
    <property type="evidence" value="ECO:0000314"/>
    <property type="project" value="UniProtKB"/>
</dbReference>
<dbReference type="GO" id="GO:0051639">
    <property type="term" value="P:actin filament network formation"/>
    <property type="evidence" value="ECO:0000314"/>
    <property type="project" value="UniProtKB"/>
</dbReference>
<dbReference type="GO" id="GO:0007015">
    <property type="term" value="P:actin filament organization"/>
    <property type="evidence" value="ECO:0000303"/>
    <property type="project" value="BHF-UCL"/>
</dbReference>
<dbReference type="GO" id="GO:0051638">
    <property type="term" value="P:barbed-end actin filament uncapping"/>
    <property type="evidence" value="ECO:0000250"/>
    <property type="project" value="CAFA"/>
</dbReference>
<dbReference type="GO" id="GO:0016477">
    <property type="term" value="P:cell migration"/>
    <property type="evidence" value="ECO:0000315"/>
    <property type="project" value="BHF-UCL"/>
</dbReference>
<dbReference type="GO" id="GO:0030032">
    <property type="term" value="P:lamellipodium assembly"/>
    <property type="evidence" value="ECO:0000315"/>
    <property type="project" value="BHF-UCL"/>
</dbReference>
<dbReference type="GO" id="GO:0044351">
    <property type="term" value="P:macropinocytosis"/>
    <property type="evidence" value="ECO:0000314"/>
    <property type="project" value="UniProtKB"/>
</dbReference>
<dbReference type="GO" id="GO:2000813">
    <property type="term" value="P:negative regulation of barbed-end actin filament capping"/>
    <property type="evidence" value="ECO:0000250"/>
    <property type="project" value="CAFA"/>
</dbReference>
<dbReference type="GO" id="GO:0030838">
    <property type="term" value="P:positive regulation of actin filament polymerization"/>
    <property type="evidence" value="ECO:0000250"/>
    <property type="project" value="CAFA"/>
</dbReference>
<dbReference type="GO" id="GO:0030335">
    <property type="term" value="P:positive regulation of cell migration"/>
    <property type="evidence" value="ECO:0000314"/>
    <property type="project" value="UniProtKB"/>
</dbReference>
<dbReference type="GO" id="GO:1902745">
    <property type="term" value="P:positive regulation of lamellipodium organization"/>
    <property type="evidence" value="ECO:0000314"/>
    <property type="project" value="UniProtKB"/>
</dbReference>
<dbReference type="GO" id="GO:0051496">
    <property type="term" value="P:positive regulation of stress fiber assembly"/>
    <property type="evidence" value="ECO:0000315"/>
    <property type="project" value="UniProtKB"/>
</dbReference>
<dbReference type="GO" id="GO:1900026">
    <property type="term" value="P:positive regulation of substrate adhesion-dependent cell spreading"/>
    <property type="evidence" value="ECO:0000315"/>
    <property type="project" value="UniProtKB"/>
</dbReference>
<dbReference type="GO" id="GO:0034315">
    <property type="term" value="P:regulation of Arp2/3 complex-mediated actin nucleation"/>
    <property type="evidence" value="ECO:0000318"/>
    <property type="project" value="GO_Central"/>
</dbReference>
<dbReference type="GO" id="GO:0031529">
    <property type="term" value="P:ruffle organization"/>
    <property type="evidence" value="ECO:0000315"/>
    <property type="project" value="BHF-UCL"/>
</dbReference>
<dbReference type="GO" id="GO:0046415">
    <property type="term" value="P:urate metabolic process"/>
    <property type="evidence" value="ECO:0000315"/>
    <property type="project" value="UniProtKB"/>
</dbReference>
<dbReference type="DisProt" id="DP01701"/>
<dbReference type="FunFam" id="2.30.29.30:FF:000253">
    <property type="entry name" value="F-actin-uncapping protein LRRC16A isoform X1"/>
    <property type="match status" value="1"/>
</dbReference>
<dbReference type="FunFam" id="3.80.10.10:FF:000009">
    <property type="entry name" value="F-actin-uncapping protein LRRC16A isoform X1"/>
    <property type="match status" value="1"/>
</dbReference>
<dbReference type="Gene3D" id="6.10.140.1850">
    <property type="match status" value="1"/>
</dbReference>
<dbReference type="Gene3D" id="2.30.29.30">
    <property type="entry name" value="Pleckstrin-homology domain (PH domain)/Phosphotyrosine-binding domain (PTB)"/>
    <property type="match status" value="1"/>
</dbReference>
<dbReference type="Gene3D" id="3.80.10.10">
    <property type="entry name" value="Ribonuclease Inhibitor"/>
    <property type="match status" value="1"/>
</dbReference>
<dbReference type="InterPro" id="IPR031943">
    <property type="entry name" value="CARMIL_C"/>
</dbReference>
<dbReference type="InterPro" id="IPR041245">
    <property type="entry name" value="CARMIL_PH"/>
</dbReference>
<dbReference type="InterPro" id="IPR001611">
    <property type="entry name" value="Leu-rich_rpt"/>
</dbReference>
<dbReference type="InterPro" id="IPR032675">
    <property type="entry name" value="LRR_dom_sf"/>
</dbReference>
<dbReference type="InterPro" id="IPR011993">
    <property type="entry name" value="PH-like_dom_sf"/>
</dbReference>
<dbReference type="InterPro" id="IPR051279">
    <property type="entry name" value="PP1-Reg/Actin-Interact_Protein"/>
</dbReference>
<dbReference type="PANTHER" id="PTHR24112:SF39">
    <property type="entry name" value="F-ACTIN-UNCAPPING PROTEIN LRRC16A"/>
    <property type="match status" value="1"/>
</dbReference>
<dbReference type="PANTHER" id="PTHR24112">
    <property type="entry name" value="LEUCINE-RICH REPEAT, ISOFORM F-RELATED"/>
    <property type="match status" value="1"/>
</dbReference>
<dbReference type="Pfam" id="PF17888">
    <property type="entry name" value="Carm_PH"/>
    <property type="match status" value="1"/>
</dbReference>
<dbReference type="Pfam" id="PF16000">
    <property type="entry name" value="CARMIL_C"/>
    <property type="match status" value="1"/>
</dbReference>
<dbReference type="Pfam" id="PF13516">
    <property type="entry name" value="LRR_6"/>
    <property type="match status" value="2"/>
</dbReference>
<dbReference type="SMART" id="SM00368">
    <property type="entry name" value="LRR_RI"/>
    <property type="match status" value="6"/>
</dbReference>
<dbReference type="SUPFAM" id="SSF52047">
    <property type="entry name" value="RNI-like"/>
    <property type="match status" value="2"/>
</dbReference>
<reference key="1">
    <citation type="journal article" date="2004" name="Nat. Genet.">
        <title>Complete sequencing and characterization of 21,243 full-length human cDNAs.</title>
        <authorList>
            <person name="Ota T."/>
            <person name="Suzuki Y."/>
            <person name="Nishikawa T."/>
            <person name="Otsuki T."/>
            <person name="Sugiyama T."/>
            <person name="Irie R."/>
            <person name="Wakamatsu A."/>
            <person name="Hayashi K."/>
            <person name="Sato H."/>
            <person name="Nagai K."/>
            <person name="Kimura K."/>
            <person name="Makita H."/>
            <person name="Sekine M."/>
            <person name="Obayashi M."/>
            <person name="Nishi T."/>
            <person name="Shibahara T."/>
            <person name="Tanaka T."/>
            <person name="Ishii S."/>
            <person name="Yamamoto J."/>
            <person name="Saito K."/>
            <person name="Kawai Y."/>
            <person name="Isono Y."/>
            <person name="Nakamura Y."/>
            <person name="Nagahari K."/>
            <person name="Murakami K."/>
            <person name="Yasuda T."/>
            <person name="Iwayanagi T."/>
            <person name="Wagatsuma M."/>
            <person name="Shiratori A."/>
            <person name="Sudo H."/>
            <person name="Hosoiri T."/>
            <person name="Kaku Y."/>
            <person name="Kodaira H."/>
            <person name="Kondo H."/>
            <person name="Sugawara M."/>
            <person name="Takahashi M."/>
            <person name="Kanda K."/>
            <person name="Yokoi T."/>
            <person name="Furuya T."/>
            <person name="Kikkawa E."/>
            <person name="Omura Y."/>
            <person name="Abe K."/>
            <person name="Kamihara K."/>
            <person name="Katsuta N."/>
            <person name="Sato K."/>
            <person name="Tanikawa M."/>
            <person name="Yamazaki M."/>
            <person name="Ninomiya K."/>
            <person name="Ishibashi T."/>
            <person name="Yamashita H."/>
            <person name="Murakawa K."/>
            <person name="Fujimori K."/>
            <person name="Tanai H."/>
            <person name="Kimata M."/>
            <person name="Watanabe M."/>
            <person name="Hiraoka S."/>
            <person name="Chiba Y."/>
            <person name="Ishida S."/>
            <person name="Ono Y."/>
            <person name="Takiguchi S."/>
            <person name="Watanabe S."/>
            <person name="Yosida M."/>
            <person name="Hotuta T."/>
            <person name="Kusano J."/>
            <person name="Kanehori K."/>
            <person name="Takahashi-Fujii A."/>
            <person name="Hara H."/>
            <person name="Tanase T.-O."/>
            <person name="Nomura Y."/>
            <person name="Togiya S."/>
            <person name="Komai F."/>
            <person name="Hara R."/>
            <person name="Takeuchi K."/>
            <person name="Arita M."/>
            <person name="Imose N."/>
            <person name="Musashino K."/>
            <person name="Yuuki H."/>
            <person name="Oshima A."/>
            <person name="Sasaki N."/>
            <person name="Aotsuka S."/>
            <person name="Yoshikawa Y."/>
            <person name="Matsunawa H."/>
            <person name="Ichihara T."/>
            <person name="Shiohata N."/>
            <person name="Sano S."/>
            <person name="Moriya S."/>
            <person name="Momiyama H."/>
            <person name="Satoh N."/>
            <person name="Takami S."/>
            <person name="Terashima Y."/>
            <person name="Suzuki O."/>
            <person name="Nakagawa S."/>
            <person name="Senoh A."/>
            <person name="Mizoguchi H."/>
            <person name="Goto Y."/>
            <person name="Shimizu F."/>
            <person name="Wakebe H."/>
            <person name="Hishigaki H."/>
            <person name="Watanabe T."/>
            <person name="Sugiyama A."/>
            <person name="Takemoto M."/>
            <person name="Kawakami B."/>
            <person name="Yamazaki M."/>
            <person name="Watanabe K."/>
            <person name="Kumagai A."/>
            <person name="Itakura S."/>
            <person name="Fukuzumi Y."/>
            <person name="Fujimori Y."/>
            <person name="Komiyama M."/>
            <person name="Tashiro H."/>
            <person name="Tanigami A."/>
            <person name="Fujiwara T."/>
            <person name="Ono T."/>
            <person name="Yamada K."/>
            <person name="Fujii Y."/>
            <person name="Ozaki K."/>
            <person name="Hirao M."/>
            <person name="Ohmori Y."/>
            <person name="Kawabata A."/>
            <person name="Hikiji T."/>
            <person name="Kobatake N."/>
            <person name="Inagaki H."/>
            <person name="Ikema Y."/>
            <person name="Okamoto S."/>
            <person name="Okitani R."/>
            <person name="Kawakami T."/>
            <person name="Noguchi S."/>
            <person name="Itoh T."/>
            <person name="Shigeta K."/>
            <person name="Senba T."/>
            <person name="Matsumura K."/>
            <person name="Nakajima Y."/>
            <person name="Mizuno T."/>
            <person name="Morinaga M."/>
            <person name="Sasaki M."/>
            <person name="Togashi T."/>
            <person name="Oyama M."/>
            <person name="Hata H."/>
            <person name="Watanabe M."/>
            <person name="Komatsu T."/>
            <person name="Mizushima-Sugano J."/>
            <person name="Satoh T."/>
            <person name="Shirai Y."/>
            <person name="Takahashi Y."/>
            <person name="Nakagawa K."/>
            <person name="Okumura K."/>
            <person name="Nagase T."/>
            <person name="Nomura N."/>
            <person name="Kikuchi H."/>
            <person name="Masuho Y."/>
            <person name="Yamashita R."/>
            <person name="Nakai K."/>
            <person name="Yada T."/>
            <person name="Nakamura Y."/>
            <person name="Ohara O."/>
            <person name="Isogai T."/>
            <person name="Sugano S."/>
        </authorList>
    </citation>
    <scope>NUCLEOTIDE SEQUENCE [LARGE SCALE MRNA] (ISOFORMS 3 AND 4)</scope>
    <scope>NUCLEOTIDE SEQUENCE [LARGE SCALE MRNA] OF 766-1371 (ISOFORM 2)</scope>
    <source>
        <tissue>Colon</tissue>
        <tissue>Esophageal carcinoma</tissue>
        <tissue>Teratocarcinoma</tissue>
    </source>
</reference>
<reference key="2">
    <citation type="journal article" date="2003" name="Nature">
        <title>The DNA sequence and analysis of human chromosome 6.</title>
        <authorList>
            <person name="Mungall A.J."/>
            <person name="Palmer S.A."/>
            <person name="Sims S.K."/>
            <person name="Edwards C.A."/>
            <person name="Ashurst J.L."/>
            <person name="Wilming L."/>
            <person name="Jones M.C."/>
            <person name="Horton R."/>
            <person name="Hunt S.E."/>
            <person name="Scott C.E."/>
            <person name="Gilbert J.G.R."/>
            <person name="Clamp M.E."/>
            <person name="Bethel G."/>
            <person name="Milne S."/>
            <person name="Ainscough R."/>
            <person name="Almeida J.P."/>
            <person name="Ambrose K.D."/>
            <person name="Andrews T.D."/>
            <person name="Ashwell R.I.S."/>
            <person name="Babbage A.K."/>
            <person name="Bagguley C.L."/>
            <person name="Bailey J."/>
            <person name="Banerjee R."/>
            <person name="Barker D.J."/>
            <person name="Barlow K.F."/>
            <person name="Bates K."/>
            <person name="Beare D.M."/>
            <person name="Beasley H."/>
            <person name="Beasley O."/>
            <person name="Bird C.P."/>
            <person name="Blakey S.E."/>
            <person name="Bray-Allen S."/>
            <person name="Brook J."/>
            <person name="Brown A.J."/>
            <person name="Brown J.Y."/>
            <person name="Burford D.C."/>
            <person name="Burrill W."/>
            <person name="Burton J."/>
            <person name="Carder C."/>
            <person name="Carter N.P."/>
            <person name="Chapman J.C."/>
            <person name="Clark S.Y."/>
            <person name="Clark G."/>
            <person name="Clee C.M."/>
            <person name="Clegg S."/>
            <person name="Cobley V."/>
            <person name="Collier R.E."/>
            <person name="Collins J.E."/>
            <person name="Colman L.K."/>
            <person name="Corby N.R."/>
            <person name="Coville G.J."/>
            <person name="Culley K.M."/>
            <person name="Dhami P."/>
            <person name="Davies J."/>
            <person name="Dunn M."/>
            <person name="Earthrowl M.E."/>
            <person name="Ellington A.E."/>
            <person name="Evans K.A."/>
            <person name="Faulkner L."/>
            <person name="Francis M.D."/>
            <person name="Frankish A."/>
            <person name="Frankland J."/>
            <person name="French L."/>
            <person name="Garner P."/>
            <person name="Garnett J."/>
            <person name="Ghori M.J."/>
            <person name="Gilby L.M."/>
            <person name="Gillson C.J."/>
            <person name="Glithero R.J."/>
            <person name="Grafham D.V."/>
            <person name="Grant M."/>
            <person name="Gribble S."/>
            <person name="Griffiths C."/>
            <person name="Griffiths M.N.D."/>
            <person name="Hall R."/>
            <person name="Halls K.S."/>
            <person name="Hammond S."/>
            <person name="Harley J.L."/>
            <person name="Hart E.A."/>
            <person name="Heath P.D."/>
            <person name="Heathcott R."/>
            <person name="Holmes S.J."/>
            <person name="Howden P.J."/>
            <person name="Howe K.L."/>
            <person name="Howell G.R."/>
            <person name="Huckle E."/>
            <person name="Humphray S.J."/>
            <person name="Humphries M.D."/>
            <person name="Hunt A.R."/>
            <person name="Johnson C.M."/>
            <person name="Joy A.A."/>
            <person name="Kay M."/>
            <person name="Keenan S.J."/>
            <person name="Kimberley A.M."/>
            <person name="King A."/>
            <person name="Laird G.K."/>
            <person name="Langford C."/>
            <person name="Lawlor S."/>
            <person name="Leongamornlert D.A."/>
            <person name="Leversha M."/>
            <person name="Lloyd C.R."/>
            <person name="Lloyd D.M."/>
            <person name="Loveland J.E."/>
            <person name="Lovell J."/>
            <person name="Martin S."/>
            <person name="Mashreghi-Mohammadi M."/>
            <person name="Maslen G.L."/>
            <person name="Matthews L."/>
            <person name="McCann O.T."/>
            <person name="McLaren S.J."/>
            <person name="McLay K."/>
            <person name="McMurray A."/>
            <person name="Moore M.J.F."/>
            <person name="Mullikin J.C."/>
            <person name="Niblett D."/>
            <person name="Nickerson T."/>
            <person name="Novik K.L."/>
            <person name="Oliver K."/>
            <person name="Overton-Larty E.K."/>
            <person name="Parker A."/>
            <person name="Patel R."/>
            <person name="Pearce A.V."/>
            <person name="Peck A.I."/>
            <person name="Phillimore B.J.C.T."/>
            <person name="Phillips S."/>
            <person name="Plumb R.W."/>
            <person name="Porter K.M."/>
            <person name="Ramsey Y."/>
            <person name="Ranby S.A."/>
            <person name="Rice C.M."/>
            <person name="Ross M.T."/>
            <person name="Searle S.M."/>
            <person name="Sehra H.K."/>
            <person name="Sheridan E."/>
            <person name="Skuce C.D."/>
            <person name="Smith S."/>
            <person name="Smith M."/>
            <person name="Spraggon L."/>
            <person name="Squares S.L."/>
            <person name="Steward C.A."/>
            <person name="Sycamore N."/>
            <person name="Tamlyn-Hall G."/>
            <person name="Tester J."/>
            <person name="Theaker A.J."/>
            <person name="Thomas D.W."/>
            <person name="Thorpe A."/>
            <person name="Tracey A."/>
            <person name="Tromans A."/>
            <person name="Tubby B."/>
            <person name="Wall M."/>
            <person name="Wallis J.M."/>
            <person name="West A.P."/>
            <person name="White S.S."/>
            <person name="Whitehead S.L."/>
            <person name="Whittaker H."/>
            <person name="Wild A."/>
            <person name="Willey D.J."/>
            <person name="Wilmer T.E."/>
            <person name="Wood J.M."/>
            <person name="Wray P.W."/>
            <person name="Wyatt J.C."/>
            <person name="Young L."/>
            <person name="Younger R.M."/>
            <person name="Bentley D.R."/>
            <person name="Coulson A."/>
            <person name="Durbin R.M."/>
            <person name="Hubbard T."/>
            <person name="Sulston J.E."/>
            <person name="Dunham I."/>
            <person name="Rogers J."/>
            <person name="Beck S."/>
        </authorList>
    </citation>
    <scope>NUCLEOTIDE SEQUENCE [LARGE SCALE GENOMIC DNA]</scope>
</reference>
<reference key="3">
    <citation type="journal article" date="2009" name="Mol. Biol. Cell">
        <title>Distinct roles for CARMIL isoforms in cell migration.</title>
        <authorList>
            <person name="Liang Y."/>
            <person name="Niederstrasser H."/>
            <person name="Edwards M."/>
            <person name="Jackson C.E."/>
            <person name="Cooper J.A."/>
        </authorList>
    </citation>
    <scope>NUCLEOTIDE SEQUENCE [MRNA] (ISOFORM 1)</scope>
    <scope>FUNCTION</scope>
    <scope>SUBCELLULAR LOCATION</scope>
    <scope>SUBUNIT</scope>
    <scope>INTERACTION WITH F-ACTIN-CAPPING PROTEIN; MYO1E AND TRIO</scope>
</reference>
<reference key="4">
    <citation type="journal article" date="2005" name="Dev. Cell">
        <title>Mammalian CARMIL inhibits actin filament capping by capping protein.</title>
        <authorList>
            <person name="Yang C."/>
            <person name="Pring M."/>
            <person name="Wear M.A."/>
            <person name="Huang M."/>
            <person name="Cooper J.A."/>
            <person name="Svitkina T.M."/>
            <person name="Zigmond S.H."/>
        </authorList>
    </citation>
    <scope>FUNCTION</scope>
    <scope>TISSUE SPECIFICITY</scope>
</reference>
<reference key="5">
    <citation type="journal article" date="2008" name="Proc. Natl. Acad. Sci. U.S.A.">
        <title>A quantitative atlas of mitotic phosphorylation.</title>
        <authorList>
            <person name="Dephoure N."/>
            <person name="Zhou C."/>
            <person name="Villen J."/>
            <person name="Beausoleil S.A."/>
            <person name="Bakalarski C.E."/>
            <person name="Elledge S.J."/>
            <person name="Gygi S.P."/>
        </authorList>
    </citation>
    <scope>PHOSPHORYLATION [LARGE SCALE ANALYSIS] AT THR-916; SER-968; SER-1288; SER-1291 AND SER-1331</scope>
    <scope>IDENTIFICATION BY MASS SPECTROMETRY [LARGE SCALE ANALYSIS]</scope>
    <source>
        <tissue>Cervix carcinoma</tissue>
    </source>
</reference>
<reference key="6">
    <citation type="journal article" date="2009" name="Anal. Chem.">
        <title>Lys-N and trypsin cover complementary parts of the phosphoproteome in a refined SCX-based approach.</title>
        <authorList>
            <person name="Gauci S."/>
            <person name="Helbig A.O."/>
            <person name="Slijper M."/>
            <person name="Krijgsveld J."/>
            <person name="Heck A.J."/>
            <person name="Mohammed S."/>
        </authorList>
    </citation>
    <scope>IDENTIFICATION BY MASS SPECTROMETRY [LARGE SCALE ANALYSIS]</scope>
</reference>
<reference key="7">
    <citation type="journal article" date="2009" name="Sci. Signal.">
        <title>Quantitative phosphoproteomic analysis of T cell receptor signaling reveals system-wide modulation of protein-protein interactions.</title>
        <authorList>
            <person name="Mayya V."/>
            <person name="Lundgren D.H."/>
            <person name="Hwang S.-I."/>
            <person name="Rezaul K."/>
            <person name="Wu L."/>
            <person name="Eng J.K."/>
            <person name="Rodionov V."/>
            <person name="Han D.K."/>
        </authorList>
    </citation>
    <scope>PHOSPHORYLATION [LARGE SCALE ANALYSIS] AT SER-968</scope>
    <scope>IDENTIFICATION BY MASS SPECTROMETRY [LARGE SCALE ANALYSIS]</scope>
    <source>
        <tissue>Leukemic T-cell</tissue>
    </source>
</reference>
<reference key="8">
    <citation type="journal article" date="2010" name="Sci. Signal.">
        <title>Quantitative phosphoproteomics reveals widespread full phosphorylation site occupancy during mitosis.</title>
        <authorList>
            <person name="Olsen J.V."/>
            <person name="Vermeulen M."/>
            <person name="Santamaria A."/>
            <person name="Kumar C."/>
            <person name="Miller M.L."/>
            <person name="Jensen L.J."/>
            <person name="Gnad F."/>
            <person name="Cox J."/>
            <person name="Jensen T.S."/>
            <person name="Nigg E.A."/>
            <person name="Brunak S."/>
            <person name="Mann M."/>
        </authorList>
    </citation>
    <scope>PHOSPHORYLATION [LARGE SCALE ANALYSIS] AT SER-1067; SER-1288 AND SER-1331</scope>
    <scope>IDENTIFICATION BY MASS SPECTROMETRY [LARGE SCALE ANALYSIS]</scope>
    <source>
        <tissue>Cervix carcinoma</tissue>
    </source>
</reference>
<reference key="9">
    <citation type="journal article" date="2011" name="BMC Syst. Biol.">
        <title>Initial characterization of the human central proteome.</title>
        <authorList>
            <person name="Burkard T.R."/>
            <person name="Planyavsky M."/>
            <person name="Kaupe I."/>
            <person name="Breitwieser F.P."/>
            <person name="Buerckstuemmer T."/>
            <person name="Bennett K.L."/>
            <person name="Superti-Furga G."/>
            <person name="Colinge J."/>
        </authorList>
    </citation>
    <scope>IDENTIFICATION BY MASS SPECTROMETRY [LARGE SCALE ANALYSIS]</scope>
</reference>
<reference key="10">
    <citation type="journal article" date="2011" name="Sci. Signal.">
        <title>System-wide temporal characterization of the proteome and phosphoproteome of human embryonic stem cell differentiation.</title>
        <authorList>
            <person name="Rigbolt K.T."/>
            <person name="Prokhorova T.A."/>
            <person name="Akimov V."/>
            <person name="Henningsen J."/>
            <person name="Johansen P.T."/>
            <person name="Kratchmarova I."/>
            <person name="Kassem M."/>
            <person name="Mann M."/>
            <person name="Olsen J.V."/>
            <person name="Blagoev B."/>
        </authorList>
    </citation>
    <scope>PHOSPHORYLATION [LARGE SCALE ANALYSIS] AT SER-968; SER-1288; SER-1315; SER-1331 AND SER-1360</scope>
    <scope>IDENTIFICATION BY MASS SPECTROMETRY [LARGE SCALE ANALYSIS]</scope>
</reference>
<reference key="11">
    <citation type="journal article" date="2012" name="Proc. Natl. Acad. Sci. U.S.A.">
        <title>N-terminal acetylome analyses and functional insights of the N-terminal acetyltransferase NatB.</title>
        <authorList>
            <person name="Van Damme P."/>
            <person name="Lasa M."/>
            <person name="Polevoda B."/>
            <person name="Gazquez C."/>
            <person name="Elosegui-Artola A."/>
            <person name="Kim D.S."/>
            <person name="De Juan-Pardo E."/>
            <person name="Demeyer K."/>
            <person name="Hole K."/>
            <person name="Larrea E."/>
            <person name="Timmerman E."/>
            <person name="Prieto J."/>
            <person name="Arnesen T."/>
            <person name="Sherman F."/>
            <person name="Gevaert K."/>
            <person name="Aldabe R."/>
        </authorList>
    </citation>
    <scope>ACETYLATION [LARGE SCALE ANALYSIS] AT MET-1</scope>
    <scope>IDENTIFICATION BY MASS SPECTROMETRY [LARGE SCALE ANALYSIS]</scope>
</reference>
<reference key="12">
    <citation type="journal article" date="2013" name="J. Proteome Res.">
        <title>Toward a comprehensive characterization of a human cancer cell phosphoproteome.</title>
        <authorList>
            <person name="Zhou H."/>
            <person name="Di Palma S."/>
            <person name="Preisinger C."/>
            <person name="Peng M."/>
            <person name="Polat A.N."/>
            <person name="Heck A.J."/>
            <person name="Mohammed S."/>
        </authorList>
    </citation>
    <scope>PHOSPHORYLATION [LARGE SCALE ANALYSIS] AT SER-122; SER-968; SER-1067; SER-1094; THR-1228; SER-1280; SER-1288; SER-1291; SER-1324; SER-1331 AND SER-1360</scope>
    <scope>IDENTIFICATION BY MASS SPECTROMETRY [LARGE SCALE ANALYSIS]</scope>
    <source>
        <tissue>Cervix carcinoma</tissue>
    </source>
</reference>
<reference key="13">
    <citation type="journal article" date="2014" name="J. Proteomics">
        <title>An enzyme assisted RP-RPLC approach for in-depth analysis of human liver phosphoproteome.</title>
        <authorList>
            <person name="Bian Y."/>
            <person name="Song C."/>
            <person name="Cheng K."/>
            <person name="Dong M."/>
            <person name="Wang F."/>
            <person name="Huang J."/>
            <person name="Sun D."/>
            <person name="Wang L."/>
            <person name="Ye M."/>
            <person name="Zou H."/>
        </authorList>
    </citation>
    <scope>PHOSPHORYLATION [LARGE SCALE ANALYSIS] AT THR-916</scope>
    <scope>IDENTIFICATION BY MASS SPECTROMETRY [LARGE SCALE ANALYSIS]</scope>
    <source>
        <tissue>Liver</tissue>
    </source>
</reference>
<reference key="14">
    <citation type="journal article" date="2016" name="J. Biol. Chem.">
        <title>Cell migration and invadopodia formation require a membrane-binding domain of CARMIL2.</title>
        <authorList>
            <person name="Lanier M.H."/>
            <person name="McConnell P."/>
            <person name="Cooper J.A."/>
        </authorList>
    </citation>
    <scope>SUBCELLULAR LOCATION</scope>
    <scope>DOMAIN</scope>
</reference>
<protein>
    <recommendedName>
        <fullName evidence="11">F-actin-uncapping protein LRRC16A</fullName>
    </recommendedName>
    <alternativeName>
        <fullName evidence="2">CARMIL homolog</fullName>
    </alternativeName>
    <alternativeName>
        <fullName evidence="12">Capping protein regulator and myosin 1 linker protein 1</fullName>
    </alternativeName>
    <alternativeName>
        <fullName evidence="2">Capping protein, Arp2/3 and myosin-I linker homolog 1</fullName>
    </alternativeName>
    <alternativeName>
        <fullName evidence="9">Capping protein, Arp2/3 and myosin-I linker protein 1</fullName>
    </alternativeName>
    <alternativeName>
        <fullName evidence="12">Leucine-rich repeat-containing protein 16A</fullName>
    </alternativeName>
</protein>
<evidence type="ECO:0000250" key="1">
    <source>
        <dbReference type="UniProtKB" id="Q6EDY6"/>
    </source>
</evidence>
<evidence type="ECO:0000250" key="2">
    <source>
        <dbReference type="UniProtKB" id="Q95VZ3"/>
    </source>
</evidence>
<evidence type="ECO:0000255" key="3"/>
<evidence type="ECO:0000256" key="4">
    <source>
        <dbReference type="SAM" id="MobiDB-lite"/>
    </source>
</evidence>
<evidence type="ECO:0000269" key="5">
    <source>
    </source>
</evidence>
<evidence type="ECO:0000269" key="6">
    <source>
    </source>
</evidence>
<evidence type="ECO:0000269" key="7">
    <source>
    </source>
</evidence>
<evidence type="ECO:0000303" key="8">
    <source>
    </source>
</evidence>
<evidence type="ECO:0000303" key="9">
    <source>
    </source>
</evidence>
<evidence type="ECO:0000303" key="10">
    <source>
    </source>
</evidence>
<evidence type="ECO:0000305" key="11"/>
<evidence type="ECO:0000312" key="12">
    <source>
        <dbReference type="HGNC" id="HGNC:21581"/>
    </source>
</evidence>
<evidence type="ECO:0007744" key="13">
    <source>
    </source>
</evidence>
<evidence type="ECO:0007744" key="14">
    <source>
    </source>
</evidence>
<evidence type="ECO:0007744" key="15">
    <source>
    </source>
</evidence>
<evidence type="ECO:0007744" key="16">
    <source>
    </source>
</evidence>
<evidence type="ECO:0007744" key="17">
    <source>
    </source>
</evidence>
<evidence type="ECO:0007744" key="18">
    <source>
    </source>
</evidence>
<evidence type="ECO:0007744" key="19">
    <source>
    </source>
</evidence>
<evidence type="ECO:0007829" key="20">
    <source>
        <dbReference type="PDB" id="3LK2"/>
    </source>
</evidence>
<evidence type="ECO:0007829" key="21">
    <source>
        <dbReference type="PDB" id="3LK3"/>
    </source>
</evidence>
<sequence length="1371" mass="151557">MTEESSDVPRELIESIKDVIGRKIKISVKKKVKLEVKGDKVENKVLVLTSCRAFLVTARIPTKLELTFSYLEIHGVVCSKSAQMIVETEKCSISMKMASPEDVSEVLAHIGTCLRKIFPGLSPVRIMKKVSMEPSERLASLQALWDSQTVAEQGPCGGFSQMYACVCDWLGFSYREEVQWDVDTIYLTQDTRELNLQDFSHLDHRDLIPIIAALEYNQWFTKLSSKDLKLSTDVCEQILRVVSRSNRLEELVLENAGLRTDFAQKLASALAHNPNSGLHTINLAGNPLEDRGVSSLSIQFAKLPKGLKHLNLSKTSLSPKGVNSLSQSLSANPLTASTLVHLDLSGNVLRGDDLSHMYNFLAQPNAIVHLDLSNTECSLDMVCGALLRGCLQYLAVLNLSRTVFSHRKGKEVPPSFKQFFSSSLALMHINLSGTKLSPEPLKALLLGLACNHNLKGVSLDLSNCELRSGGAQVLEGCIAEIHNITSLDISDNGLESDLSTLIVWLSKNRSIQHLALGKNFNNMKSKNLTPVLDNLVQMIQDEESPLQSLSLADSKLKTEVTIIINALGSNTSLTKVDISGNGMGDMGAKMLAKALQINTKLRTVIWDKNNITAQGFQDIAVAMEKNYTLRFMPIPMYDASQALKTNPEKTEDALQKIENYLLRNHETRKYLQEQAYRLQQGIVTSTTQQMIDRICVKVQDHLNSLRNCGGDAIQEDLKSAERLMRDAKNSKTLLPNLYHVGGASWAGASGLLSSPIQETLESMAGEVTRVVDEQLKALLESMVDAAENLCPNVMKKAHIRQDLIHASTEKISIPRTFVKNVLLEQSGIDILNKISEVKLTVASFLSDRIVDEILDALSHCHHKLADHFSRRGKTLPQQESLEIELAEEKPVKRSIITVEELTEIERLEDLDTCMMTPKSKRKSIHSRMLRPVSRAFEMEFDLDKALEEVPIHIEDPPFPSLRQEKRSSGFISELPSEEGKKLEHFTKLRPKRNKKQQPTQAAVCAANIVSQDGEQNGLMGRVDEGVDEFFTKKVTKMDSKKWSTRGSESHELNEGGDEKKKRDSRKSSGFLNLIKSRSKSERPPTILMTEEPSSPKGAVRSPPVDCPRKDTKAAEHNGNSERIEEIKTPDSFEESQGEEIGKVERSDSKSSPQAGRRYGVQVMGSGLLAEMKAKQEKRAACAQKKLGNDAVSQDSSSPALSGVERSDGGGAVPKLHPGLPENRFGLGTPEKNTKAEPKAEAGSRSRSSSSTPTSPKPLLQSPKPSLAARPVIPQKPRTASRPDDIPDSPSSPKVALLPPVLKKVPSDKERDGQSSPQPSPRTFSQEVSRRSWGQQAQEYQEQKQRSSSKDGHQGSKSNDSGEEAEKEFIFV</sequence>
<keyword id="KW-0002">3D-structure</keyword>
<keyword id="KW-0007">Acetylation</keyword>
<keyword id="KW-0025">Alternative splicing</keyword>
<keyword id="KW-1003">Cell membrane</keyword>
<keyword id="KW-0966">Cell projection</keyword>
<keyword id="KW-0175">Coiled coil</keyword>
<keyword id="KW-0963">Cytoplasm</keyword>
<keyword id="KW-0206">Cytoskeleton</keyword>
<keyword id="KW-0433">Leucine-rich repeat</keyword>
<keyword id="KW-0472">Membrane</keyword>
<keyword id="KW-0597">Phosphoprotein</keyword>
<keyword id="KW-1267">Proteomics identification</keyword>
<keyword id="KW-1185">Reference proteome</keyword>
<keyword id="KW-0677">Repeat</keyword>
<proteinExistence type="evidence at protein level"/>